<gene>
    <name evidence="1" type="primary">rlmH</name>
    <name type="ordered locus">Moth_2416</name>
</gene>
<evidence type="ECO:0000255" key="1">
    <source>
        <dbReference type="HAMAP-Rule" id="MF_00658"/>
    </source>
</evidence>
<name>RLMH_MOOTA</name>
<dbReference type="EC" id="2.1.1.177" evidence="1"/>
<dbReference type="EMBL" id="CP000232">
    <property type="protein sequence ID" value="ABC20698.1"/>
    <property type="molecule type" value="Genomic_DNA"/>
</dbReference>
<dbReference type="RefSeq" id="YP_431241.1">
    <property type="nucleotide sequence ID" value="NC_007644.1"/>
</dbReference>
<dbReference type="SMR" id="Q2RFU1"/>
<dbReference type="STRING" id="264732.Moth_2416"/>
<dbReference type="EnsemblBacteria" id="ABC20698">
    <property type="protein sequence ID" value="ABC20698"/>
    <property type="gene ID" value="Moth_2416"/>
</dbReference>
<dbReference type="KEGG" id="mta:Moth_2416"/>
<dbReference type="PATRIC" id="fig|264732.11.peg.2631"/>
<dbReference type="eggNOG" id="COG1576">
    <property type="taxonomic scope" value="Bacteria"/>
</dbReference>
<dbReference type="HOGENOM" id="CLU_100552_0_0_9"/>
<dbReference type="OrthoDB" id="9806643at2"/>
<dbReference type="GO" id="GO:0005737">
    <property type="term" value="C:cytoplasm"/>
    <property type="evidence" value="ECO:0007669"/>
    <property type="project" value="UniProtKB-SubCell"/>
</dbReference>
<dbReference type="GO" id="GO:0070038">
    <property type="term" value="F:rRNA (pseudouridine-N3-)-methyltransferase activity"/>
    <property type="evidence" value="ECO:0007669"/>
    <property type="project" value="UniProtKB-UniRule"/>
</dbReference>
<dbReference type="CDD" id="cd18081">
    <property type="entry name" value="RlmH-like"/>
    <property type="match status" value="1"/>
</dbReference>
<dbReference type="Gene3D" id="3.40.1280.10">
    <property type="match status" value="1"/>
</dbReference>
<dbReference type="HAMAP" id="MF_00658">
    <property type="entry name" value="23SrRNA_methyltr_H"/>
    <property type="match status" value="1"/>
</dbReference>
<dbReference type="InterPro" id="IPR029028">
    <property type="entry name" value="Alpha/beta_knot_MTases"/>
</dbReference>
<dbReference type="InterPro" id="IPR003742">
    <property type="entry name" value="RlmH-like"/>
</dbReference>
<dbReference type="InterPro" id="IPR029026">
    <property type="entry name" value="tRNA_m1G_MTases_N"/>
</dbReference>
<dbReference type="NCBIfam" id="NF000985">
    <property type="entry name" value="PRK00103.1-3"/>
    <property type="match status" value="1"/>
</dbReference>
<dbReference type="PANTHER" id="PTHR33603">
    <property type="entry name" value="METHYLTRANSFERASE"/>
    <property type="match status" value="1"/>
</dbReference>
<dbReference type="PANTHER" id="PTHR33603:SF1">
    <property type="entry name" value="RIBOSOMAL RNA LARGE SUBUNIT METHYLTRANSFERASE H"/>
    <property type="match status" value="1"/>
</dbReference>
<dbReference type="Pfam" id="PF02590">
    <property type="entry name" value="SPOUT_MTase"/>
    <property type="match status" value="1"/>
</dbReference>
<dbReference type="PIRSF" id="PIRSF004505">
    <property type="entry name" value="MT_bac"/>
    <property type="match status" value="1"/>
</dbReference>
<dbReference type="SUPFAM" id="SSF75217">
    <property type="entry name" value="alpha/beta knot"/>
    <property type="match status" value="1"/>
</dbReference>
<keyword id="KW-0963">Cytoplasm</keyword>
<keyword id="KW-0489">Methyltransferase</keyword>
<keyword id="KW-0698">rRNA processing</keyword>
<keyword id="KW-0949">S-adenosyl-L-methionine</keyword>
<keyword id="KW-0808">Transferase</keyword>
<comment type="function">
    <text evidence="1">Specifically methylates the pseudouridine at position 1915 (m3Psi1915) in 23S rRNA.</text>
</comment>
<comment type="catalytic activity">
    <reaction evidence="1">
        <text>pseudouridine(1915) in 23S rRNA + S-adenosyl-L-methionine = N(3)-methylpseudouridine(1915) in 23S rRNA + S-adenosyl-L-homocysteine + H(+)</text>
        <dbReference type="Rhea" id="RHEA:42752"/>
        <dbReference type="Rhea" id="RHEA-COMP:10221"/>
        <dbReference type="Rhea" id="RHEA-COMP:10222"/>
        <dbReference type="ChEBI" id="CHEBI:15378"/>
        <dbReference type="ChEBI" id="CHEBI:57856"/>
        <dbReference type="ChEBI" id="CHEBI:59789"/>
        <dbReference type="ChEBI" id="CHEBI:65314"/>
        <dbReference type="ChEBI" id="CHEBI:74486"/>
        <dbReference type="EC" id="2.1.1.177"/>
    </reaction>
</comment>
<comment type="subunit">
    <text evidence="1">Homodimer.</text>
</comment>
<comment type="subcellular location">
    <subcellularLocation>
        <location evidence="1">Cytoplasm</location>
    </subcellularLocation>
</comment>
<comment type="similarity">
    <text evidence="1">Belongs to the RNA methyltransferase RlmH family.</text>
</comment>
<reference key="1">
    <citation type="journal article" date="2008" name="Environ. Microbiol.">
        <title>The complete genome sequence of Moorella thermoacetica (f. Clostridium thermoaceticum).</title>
        <authorList>
            <person name="Pierce E."/>
            <person name="Xie G."/>
            <person name="Barabote R.D."/>
            <person name="Saunders E."/>
            <person name="Han C.S."/>
            <person name="Detter J.C."/>
            <person name="Richardson P."/>
            <person name="Brettin T.S."/>
            <person name="Das A."/>
            <person name="Ljungdahl L.G."/>
            <person name="Ragsdale S.W."/>
        </authorList>
    </citation>
    <scope>NUCLEOTIDE SEQUENCE [LARGE SCALE GENOMIC DNA]</scope>
    <source>
        <strain>ATCC 39073 / JCM 9320</strain>
    </source>
</reference>
<sequence>MLHLTIVAVGRVREKYLVAGIEEYLKRLRPYARVRILEAPEEKVPDKPSPAGVEQILASEGRGIGRLIPPSSFTVALDREGVMLSSEELAGRLADLALAGKNEVALIIGGTLGLATFILQQADLRLSFSRFTFPHQLMRLILLEQLYRAFKIQRGETYHR</sequence>
<protein>
    <recommendedName>
        <fullName evidence="1">Ribosomal RNA large subunit methyltransferase H</fullName>
        <ecNumber evidence="1">2.1.1.177</ecNumber>
    </recommendedName>
    <alternativeName>
        <fullName evidence="1">23S rRNA (pseudouridine1915-N3)-methyltransferase</fullName>
    </alternativeName>
    <alternativeName>
        <fullName evidence="1">23S rRNA m3Psi1915 methyltransferase</fullName>
    </alternativeName>
    <alternativeName>
        <fullName evidence="1">rRNA (pseudouridine-N3-)-methyltransferase RlmH</fullName>
    </alternativeName>
</protein>
<feature type="chain" id="PRO_0000260571" description="Ribosomal RNA large subunit methyltransferase H">
    <location>
        <begin position="1"/>
        <end position="160"/>
    </location>
</feature>
<feature type="binding site" evidence="1">
    <location>
        <position position="77"/>
    </location>
    <ligand>
        <name>S-adenosyl-L-methionine</name>
        <dbReference type="ChEBI" id="CHEBI:59789"/>
    </ligand>
</feature>
<feature type="binding site" evidence="1">
    <location>
        <position position="109"/>
    </location>
    <ligand>
        <name>S-adenosyl-L-methionine</name>
        <dbReference type="ChEBI" id="CHEBI:59789"/>
    </ligand>
</feature>
<organism>
    <name type="scientific">Moorella thermoacetica (strain ATCC 39073 / JCM 9320)</name>
    <dbReference type="NCBI Taxonomy" id="264732"/>
    <lineage>
        <taxon>Bacteria</taxon>
        <taxon>Bacillati</taxon>
        <taxon>Bacillota</taxon>
        <taxon>Clostridia</taxon>
        <taxon>Moorellales</taxon>
        <taxon>Moorellaceae</taxon>
        <taxon>Moorella</taxon>
    </lineage>
</organism>
<accession>Q2RFU1</accession>
<proteinExistence type="inferred from homology"/>